<reference key="1">
    <citation type="journal article" date="1995" name="Proc. Natl. Acad. Sci. U.S.A.">
        <title>ndhF sequence evolution and the major clades in the sunflower family.</title>
        <authorList>
            <person name="Kim K.-J."/>
            <person name="Jansen R.K."/>
        </authorList>
    </citation>
    <scope>NUCLEOTIDE SEQUENCE [GENOMIC DNA]</scope>
</reference>
<gene>
    <name type="primary">ndhF</name>
</gene>
<name>NU5C_AMBTR</name>
<proteinExistence type="inferred from homology"/>
<organism>
    <name type="scientific">Ambrosia trifida</name>
    <name type="common">Giant ragweed</name>
    <dbReference type="NCBI Taxonomy" id="4214"/>
    <lineage>
        <taxon>Eukaryota</taxon>
        <taxon>Viridiplantae</taxon>
        <taxon>Streptophyta</taxon>
        <taxon>Embryophyta</taxon>
        <taxon>Tracheophyta</taxon>
        <taxon>Spermatophyta</taxon>
        <taxon>Magnoliopsida</taxon>
        <taxon>eudicotyledons</taxon>
        <taxon>Gunneridae</taxon>
        <taxon>Pentapetalae</taxon>
        <taxon>asterids</taxon>
        <taxon>campanulids</taxon>
        <taxon>Asterales</taxon>
        <taxon>Asteraceae</taxon>
        <taxon>Asteroideae</taxon>
        <taxon>Heliantheae alliance</taxon>
        <taxon>Heliantheae</taxon>
        <taxon>Ambrosia</taxon>
    </lineage>
</organism>
<comment type="function">
    <text evidence="1">NDH shuttles electrons from NAD(P)H:plastoquinone, via FMN and iron-sulfur (Fe-S) centers, to quinones in the photosynthetic chain and possibly in a chloroplast respiratory chain. The immediate electron acceptor for the enzyme in this species is believed to be plastoquinone. Couples the redox reaction to proton translocation, and thus conserves the redox energy in a proton gradient (By similarity).</text>
</comment>
<comment type="catalytic activity">
    <reaction>
        <text>a plastoquinone + NADH + (n+1) H(+)(in) = a plastoquinol + NAD(+) + n H(+)(out)</text>
        <dbReference type="Rhea" id="RHEA:42608"/>
        <dbReference type="Rhea" id="RHEA-COMP:9561"/>
        <dbReference type="Rhea" id="RHEA-COMP:9562"/>
        <dbReference type="ChEBI" id="CHEBI:15378"/>
        <dbReference type="ChEBI" id="CHEBI:17757"/>
        <dbReference type="ChEBI" id="CHEBI:57540"/>
        <dbReference type="ChEBI" id="CHEBI:57945"/>
        <dbReference type="ChEBI" id="CHEBI:62192"/>
    </reaction>
</comment>
<comment type="catalytic activity">
    <reaction>
        <text>a plastoquinone + NADPH + (n+1) H(+)(in) = a plastoquinol + NADP(+) + n H(+)(out)</text>
        <dbReference type="Rhea" id="RHEA:42612"/>
        <dbReference type="Rhea" id="RHEA-COMP:9561"/>
        <dbReference type="Rhea" id="RHEA-COMP:9562"/>
        <dbReference type="ChEBI" id="CHEBI:15378"/>
        <dbReference type="ChEBI" id="CHEBI:17757"/>
        <dbReference type="ChEBI" id="CHEBI:57783"/>
        <dbReference type="ChEBI" id="CHEBI:58349"/>
        <dbReference type="ChEBI" id="CHEBI:62192"/>
    </reaction>
</comment>
<comment type="subunit">
    <text evidence="1">NDH is composed of at least 16 different subunits, 5 of which are encoded in the nucleus.</text>
</comment>
<comment type="subcellular location">
    <subcellularLocation>
        <location evidence="1">Plastid</location>
        <location evidence="1">Chloroplast thylakoid membrane</location>
        <topology evidence="1">Multi-pass membrane protein</topology>
    </subcellularLocation>
</comment>
<comment type="similarity">
    <text evidence="3">Belongs to the complex I subunit 5 family.</text>
</comment>
<feature type="chain" id="PRO_0000118166" description="NAD(P)H-quinone oxidoreductase subunit 5, chloroplastic">
    <location>
        <begin position="1"/>
        <end position="743"/>
    </location>
</feature>
<feature type="transmembrane region" description="Helical" evidence="2">
    <location>
        <begin position="9"/>
        <end position="29"/>
    </location>
</feature>
<feature type="transmembrane region" description="Helical" evidence="2">
    <location>
        <begin position="40"/>
        <end position="60"/>
    </location>
</feature>
<feature type="transmembrane region" description="Helical" evidence="2">
    <location>
        <begin position="89"/>
        <end position="109"/>
    </location>
</feature>
<feature type="transmembrane region" description="Helical" evidence="2">
    <location>
        <begin position="125"/>
        <end position="145"/>
    </location>
</feature>
<feature type="transmembrane region" description="Helical" evidence="2">
    <location>
        <begin position="147"/>
        <end position="167"/>
    </location>
</feature>
<feature type="transmembrane region" description="Helical" evidence="2">
    <location>
        <begin position="185"/>
        <end position="205"/>
    </location>
</feature>
<feature type="transmembrane region" description="Helical" evidence="2">
    <location>
        <begin position="219"/>
        <end position="239"/>
    </location>
</feature>
<feature type="transmembrane region" description="Helical" evidence="2">
    <location>
        <begin position="258"/>
        <end position="278"/>
    </location>
</feature>
<feature type="transmembrane region" description="Helical" evidence="2">
    <location>
        <begin position="284"/>
        <end position="304"/>
    </location>
</feature>
<feature type="transmembrane region" description="Helical" evidence="2">
    <location>
        <begin position="327"/>
        <end position="347"/>
    </location>
</feature>
<feature type="transmembrane region" description="Helical" evidence="2">
    <location>
        <begin position="354"/>
        <end position="374"/>
    </location>
</feature>
<feature type="transmembrane region" description="Helical" evidence="2">
    <location>
        <begin position="396"/>
        <end position="416"/>
    </location>
</feature>
<feature type="transmembrane region" description="Helical" evidence="2">
    <location>
        <begin position="425"/>
        <end position="445"/>
    </location>
</feature>
<feature type="transmembrane region" description="Helical" evidence="2">
    <location>
        <begin position="551"/>
        <end position="571"/>
    </location>
</feature>
<feature type="transmembrane region" description="Helical" evidence="2">
    <location>
        <begin position="607"/>
        <end position="627"/>
    </location>
</feature>
<feature type="transmembrane region" description="Helical" evidence="2">
    <location>
        <begin position="723"/>
        <end position="743"/>
    </location>
</feature>
<protein>
    <recommendedName>
        <fullName>NAD(P)H-quinone oxidoreductase subunit 5, chloroplastic</fullName>
        <ecNumber>7.1.1.-</ecNumber>
    </recommendedName>
    <alternativeName>
        <fullName>NAD(P)H dehydrogenase subunit 5</fullName>
    </alternativeName>
    <alternativeName>
        <fullName>NADH-plastoquinone oxidoreductase subunit 5</fullName>
    </alternativeName>
</protein>
<sequence length="743" mass="84485">MEQTYQYAWIIPFLPLPVPMLIGLGLLLFPTATKSLRRMWAFQSVLLLSIVMIFSMNLSIQQINSSSVYQYVWSWIINNDFSLEFGYLIDPLTSIMSILITTVGIMVLIYSDNYMSHDHGYLRFFAYMSFFSTSMLGLVTSSNLIQIYIFWELVGMCSYLLIGFWFTRPVAAKACQKAFVTNRVGDFGLLLGILGFYWITGSFEFRDLFQIFNNLISNNEVNFLFVTLCAVLLFAGAIAKSAQFPLHVWLPDAMEGPTPISALIHAATMVAAGIFLVARLMPLFIVIPHIMNLISLIGIITVFFGATLALAQKDIKRGLAYSTMSQLGYMMLALGMGSYRSALFHLITHAYSKALLFLGSGSVIHSMETLVGYCPKKSQNMVLMGGLTKHVPITKNSFLLGTLSLCGIPPLACFWSKDEILNDSWLYSPIFAIIAWSTAGLTAFYMCRIYLLTFEGHLNVHFQNYSGKRNTPLYSISLWGKAGSKISNKNLNFRLVTLLKKKKNGRPSFFSNKVYKMDENVRNMIQPFLSIPNFDNTKTYLYPYESDNTMLFPILILILFTLFVGFLGIPFNQDVDILSKWLTPSINLLHQNSNNSIDWYEFCEDAVFSVSIASFGIYIAFFLYKPVYSSFQNLDLINSFVKMGPKRIFSDKIKNAIYDWSYNRGYIDAFYGTFFTAGVRKLAKFTHFFDRRIIDGIPNGVGFMSFFVAEVIKSVGGGRISSYLFFYFSYVSIFLFIYYFLNL</sequence>
<evidence type="ECO:0000250" key="1"/>
<evidence type="ECO:0000255" key="2"/>
<evidence type="ECO:0000305" key="3"/>
<keyword id="KW-0150">Chloroplast</keyword>
<keyword id="KW-0472">Membrane</keyword>
<keyword id="KW-0520">NAD</keyword>
<keyword id="KW-0521">NADP</keyword>
<keyword id="KW-0934">Plastid</keyword>
<keyword id="KW-0618">Plastoquinone</keyword>
<keyword id="KW-0874">Quinone</keyword>
<keyword id="KW-0793">Thylakoid</keyword>
<keyword id="KW-1278">Translocase</keyword>
<keyword id="KW-0812">Transmembrane</keyword>
<keyword id="KW-1133">Transmembrane helix</keyword>
<keyword id="KW-0813">Transport</keyword>
<accession>Q31849</accession>
<dbReference type="EC" id="7.1.1.-"/>
<dbReference type="EMBL" id="L39382">
    <property type="protein sequence ID" value="AAC37441.1"/>
    <property type="molecule type" value="Genomic_DNA"/>
</dbReference>
<dbReference type="PIR" id="T12690">
    <property type="entry name" value="T12690"/>
</dbReference>
<dbReference type="SMR" id="Q31849"/>
<dbReference type="GO" id="GO:0009535">
    <property type="term" value="C:chloroplast thylakoid membrane"/>
    <property type="evidence" value="ECO:0007669"/>
    <property type="project" value="UniProtKB-SubCell"/>
</dbReference>
<dbReference type="GO" id="GO:0008137">
    <property type="term" value="F:NADH dehydrogenase (ubiquinone) activity"/>
    <property type="evidence" value="ECO:0007669"/>
    <property type="project" value="InterPro"/>
</dbReference>
<dbReference type="GO" id="GO:0048038">
    <property type="term" value="F:quinone binding"/>
    <property type="evidence" value="ECO:0007669"/>
    <property type="project" value="UniProtKB-KW"/>
</dbReference>
<dbReference type="GO" id="GO:0042773">
    <property type="term" value="P:ATP synthesis coupled electron transport"/>
    <property type="evidence" value="ECO:0007669"/>
    <property type="project" value="InterPro"/>
</dbReference>
<dbReference type="GO" id="GO:0015990">
    <property type="term" value="P:electron transport coupled proton transport"/>
    <property type="evidence" value="ECO:0007669"/>
    <property type="project" value="TreeGrafter"/>
</dbReference>
<dbReference type="Gene3D" id="1.20.5.2700">
    <property type="match status" value="1"/>
</dbReference>
<dbReference type="InterPro" id="IPR002128">
    <property type="entry name" value="NADH_UbQ_OxRdtase_chlpt_su5_C"/>
</dbReference>
<dbReference type="InterPro" id="IPR018393">
    <property type="entry name" value="NADHpl_OxRdtase_5_subgr"/>
</dbReference>
<dbReference type="InterPro" id="IPR001750">
    <property type="entry name" value="ND/Mrp_TM"/>
</dbReference>
<dbReference type="InterPro" id="IPR003945">
    <property type="entry name" value="NU5C-like"/>
</dbReference>
<dbReference type="InterPro" id="IPR001516">
    <property type="entry name" value="Proton_antipo_N"/>
</dbReference>
<dbReference type="NCBIfam" id="TIGR01974">
    <property type="entry name" value="NDH_I_L"/>
    <property type="match status" value="1"/>
</dbReference>
<dbReference type="NCBIfam" id="NF005141">
    <property type="entry name" value="PRK06590.1"/>
    <property type="match status" value="1"/>
</dbReference>
<dbReference type="PANTHER" id="PTHR42829">
    <property type="entry name" value="NADH-UBIQUINONE OXIDOREDUCTASE CHAIN 5"/>
    <property type="match status" value="1"/>
</dbReference>
<dbReference type="PANTHER" id="PTHR42829:SF2">
    <property type="entry name" value="NADH-UBIQUINONE OXIDOREDUCTASE CHAIN 5"/>
    <property type="match status" value="1"/>
</dbReference>
<dbReference type="Pfam" id="PF01010">
    <property type="entry name" value="Proton_antipo_C"/>
    <property type="match status" value="1"/>
</dbReference>
<dbReference type="Pfam" id="PF00361">
    <property type="entry name" value="Proton_antipo_M"/>
    <property type="match status" value="1"/>
</dbReference>
<dbReference type="Pfam" id="PF00662">
    <property type="entry name" value="Proton_antipo_N"/>
    <property type="match status" value="1"/>
</dbReference>
<dbReference type="PRINTS" id="PR01434">
    <property type="entry name" value="NADHDHGNASE5"/>
</dbReference>
<dbReference type="PRINTS" id="PR01435">
    <property type="entry name" value="NPOXDRDTASE5"/>
</dbReference>
<geneLocation type="chloroplast"/>